<feature type="chain" id="PRO_0000338999" description="Uncharacterized protein ORF12">
    <location>
        <begin position="1"/>
        <end position="210"/>
    </location>
</feature>
<gene>
    <name type="ORF">12</name>
</gene>
<proteinExistence type="predicted"/>
<sequence length="210" mass="23819">MLEAEGYNAPVAIYAIYLWMSAMSISRLCHYTNTLYVVGEPSSAADIFTASILRLFQFVLTANINAFDFGQYARQQDLVKMLYFPCTAHCNTFKDPVANQLLKGRSFTTMTRDGLVDISEKKCLVRLYQLPHPEHLPTAPDEHIIIRFYEPANGCGFFLGELSRYIHRIHQLQADNDNDALRALLCENKGMLCSRSWTSPCNACHSSHDI</sequence>
<accession>Q64748</accession>
<keyword id="KW-1185">Reference proteome</keyword>
<dbReference type="EMBL" id="U46933">
    <property type="protein sequence ID" value="AAC54901.1"/>
    <property type="molecule type" value="Genomic_DNA"/>
</dbReference>
<dbReference type="RefSeq" id="NP_043875.1">
    <property type="nucleotide sequence ID" value="NC_001720.1"/>
</dbReference>
<dbReference type="KEGG" id="vg:1733461"/>
<dbReference type="Proteomes" id="UP000001594">
    <property type="component" value="Segment"/>
</dbReference>
<protein>
    <recommendedName>
        <fullName>Uncharacterized protein ORF12</fullName>
    </recommendedName>
</protein>
<organism>
    <name type="scientific">Fowl adenovirus A serotype 1 (strain CELO / Phelps)</name>
    <name type="common">FAdV-1</name>
    <name type="synonym">Avian adenovirus gal1 (strain Phelps)</name>
    <dbReference type="NCBI Taxonomy" id="10553"/>
    <lineage>
        <taxon>Viruses</taxon>
        <taxon>Varidnaviria</taxon>
        <taxon>Bamfordvirae</taxon>
        <taxon>Preplasmiviricota</taxon>
        <taxon>Tectiliviricetes</taxon>
        <taxon>Rowavirales</taxon>
        <taxon>Adenoviridae</taxon>
        <taxon>Aviadenovirus</taxon>
        <taxon>Fowl aviadenovirus A</taxon>
    </lineage>
</organism>
<reference key="1">
    <citation type="journal article" date="1996" name="J. Virol.">
        <title>The complete DNA sequence and genomic organization of the avian adenovirus CELO.</title>
        <authorList>
            <person name="Chiocca S."/>
            <person name="Kurzbauer R."/>
            <person name="Schaffner G."/>
            <person name="Baker A."/>
            <person name="Mautner V."/>
            <person name="Cotten M."/>
        </authorList>
    </citation>
    <scope>NUCLEOTIDE SEQUENCE [LARGE SCALE GENOMIC DNA]</scope>
</reference>
<name>YO12_ADEG1</name>
<organismHost>
    <name type="scientific">Galliformes</name>
    <dbReference type="NCBI Taxonomy" id="8976"/>
</organismHost>